<evidence type="ECO:0000255" key="1">
    <source>
        <dbReference type="HAMAP-Rule" id="MF_00382"/>
    </source>
</evidence>
<evidence type="ECO:0000305" key="2"/>
<protein>
    <recommendedName>
        <fullName evidence="1">Large ribosomal subunit protein bL20c</fullName>
    </recommendedName>
    <alternativeName>
        <fullName evidence="2">50S ribosomal protein L20, chloroplastic</fullName>
    </alternativeName>
</protein>
<comment type="function">
    <text evidence="1">Binds directly to 23S ribosomal RNA and is necessary for the in vitro assembly process of the 50S ribosomal subunit. It is not involved in the protein synthesizing functions of that subunit.</text>
</comment>
<comment type="subcellular location">
    <subcellularLocation>
        <location>Plastid</location>
        <location>Chloroplast</location>
    </subcellularLocation>
</comment>
<comment type="similarity">
    <text evidence="1">Belongs to the bacterial ribosomal protein bL20 family.</text>
</comment>
<accession>B1A958</accession>
<dbReference type="EMBL" id="EU431223">
    <property type="protein sequence ID" value="ABY86805.1"/>
    <property type="molecule type" value="Genomic_DNA"/>
</dbReference>
<dbReference type="RefSeq" id="YP_001671706.1">
    <property type="nucleotide sequence ID" value="NC_010323.1"/>
</dbReference>
<dbReference type="SMR" id="B1A958"/>
<dbReference type="GeneID" id="5878362"/>
<dbReference type="KEGG" id="cpap:5878362"/>
<dbReference type="OrthoDB" id="10251781at2759"/>
<dbReference type="GO" id="GO:0009507">
    <property type="term" value="C:chloroplast"/>
    <property type="evidence" value="ECO:0007669"/>
    <property type="project" value="UniProtKB-SubCell"/>
</dbReference>
<dbReference type="GO" id="GO:1990904">
    <property type="term" value="C:ribonucleoprotein complex"/>
    <property type="evidence" value="ECO:0007669"/>
    <property type="project" value="UniProtKB-KW"/>
</dbReference>
<dbReference type="GO" id="GO:0005840">
    <property type="term" value="C:ribosome"/>
    <property type="evidence" value="ECO:0007669"/>
    <property type="project" value="UniProtKB-KW"/>
</dbReference>
<dbReference type="GO" id="GO:0019843">
    <property type="term" value="F:rRNA binding"/>
    <property type="evidence" value="ECO:0007669"/>
    <property type="project" value="UniProtKB-UniRule"/>
</dbReference>
<dbReference type="GO" id="GO:0003735">
    <property type="term" value="F:structural constituent of ribosome"/>
    <property type="evidence" value="ECO:0007669"/>
    <property type="project" value="InterPro"/>
</dbReference>
<dbReference type="GO" id="GO:0000027">
    <property type="term" value="P:ribosomal large subunit assembly"/>
    <property type="evidence" value="ECO:0007669"/>
    <property type="project" value="UniProtKB-UniRule"/>
</dbReference>
<dbReference type="GO" id="GO:0006412">
    <property type="term" value="P:translation"/>
    <property type="evidence" value="ECO:0007669"/>
    <property type="project" value="InterPro"/>
</dbReference>
<dbReference type="CDD" id="cd07026">
    <property type="entry name" value="Ribosomal_L20"/>
    <property type="match status" value="1"/>
</dbReference>
<dbReference type="FunFam" id="1.10.1900.20:FF:000001">
    <property type="entry name" value="50S ribosomal protein L20"/>
    <property type="match status" value="1"/>
</dbReference>
<dbReference type="Gene3D" id="6.10.160.10">
    <property type="match status" value="1"/>
</dbReference>
<dbReference type="Gene3D" id="1.10.1900.20">
    <property type="entry name" value="Ribosomal protein L20"/>
    <property type="match status" value="1"/>
</dbReference>
<dbReference type="HAMAP" id="MF_00382">
    <property type="entry name" value="Ribosomal_bL20"/>
    <property type="match status" value="1"/>
</dbReference>
<dbReference type="InterPro" id="IPR005813">
    <property type="entry name" value="Ribosomal_bL20"/>
</dbReference>
<dbReference type="InterPro" id="IPR049946">
    <property type="entry name" value="RIBOSOMAL_L20_CS"/>
</dbReference>
<dbReference type="InterPro" id="IPR035566">
    <property type="entry name" value="Ribosomal_protein_bL20_C"/>
</dbReference>
<dbReference type="NCBIfam" id="TIGR01032">
    <property type="entry name" value="rplT_bact"/>
    <property type="match status" value="1"/>
</dbReference>
<dbReference type="PANTHER" id="PTHR10986">
    <property type="entry name" value="39S RIBOSOMAL PROTEIN L20"/>
    <property type="match status" value="1"/>
</dbReference>
<dbReference type="Pfam" id="PF00453">
    <property type="entry name" value="Ribosomal_L20"/>
    <property type="match status" value="1"/>
</dbReference>
<dbReference type="PRINTS" id="PR00062">
    <property type="entry name" value="RIBOSOMALL20"/>
</dbReference>
<dbReference type="SUPFAM" id="SSF74731">
    <property type="entry name" value="Ribosomal protein L20"/>
    <property type="match status" value="1"/>
</dbReference>
<dbReference type="PROSITE" id="PS00937">
    <property type="entry name" value="RIBOSOMAL_L20"/>
    <property type="match status" value="1"/>
</dbReference>
<proteinExistence type="inferred from homology"/>
<name>RK20_CARPA</name>
<gene>
    <name evidence="1" type="primary">rpl20</name>
</gene>
<keyword id="KW-0150">Chloroplast</keyword>
<keyword id="KW-0934">Plastid</keyword>
<keyword id="KW-0687">Ribonucleoprotein</keyword>
<keyword id="KW-0689">Ribosomal protein</keyword>
<keyword id="KW-0694">RNA-binding</keyword>
<keyword id="KW-0699">rRNA-binding</keyword>
<geneLocation type="chloroplast"/>
<reference key="1">
    <citation type="journal article" date="2008" name="Nature">
        <title>The draft genome of the transgenic tropical fruit tree papaya (Carica papaya Linnaeus).</title>
        <authorList>
            <person name="Ming R."/>
            <person name="Hou S."/>
            <person name="Feng Y."/>
            <person name="Yu Q."/>
            <person name="Dionne-Laporte A."/>
            <person name="Saw J.H."/>
            <person name="Senin P."/>
            <person name="Wang W."/>
            <person name="Ly B.V."/>
            <person name="Lewis K.L."/>
            <person name="Salzberg S.L."/>
            <person name="Feng L."/>
            <person name="Jones M.R."/>
            <person name="Skelton R.L."/>
            <person name="Murray J.E."/>
            <person name="Chen C."/>
            <person name="Qian W."/>
            <person name="Shen J."/>
            <person name="Du P."/>
            <person name="Eustice M."/>
            <person name="Tong E."/>
            <person name="Tang H."/>
            <person name="Lyons E."/>
            <person name="Paull R.E."/>
            <person name="Michael T.P."/>
            <person name="Wall K."/>
            <person name="Rice D.W."/>
            <person name="Albert H."/>
            <person name="Wang M.L."/>
            <person name="Zhu Y.J."/>
            <person name="Schatz M."/>
            <person name="Nagarajan N."/>
            <person name="Acob R.A."/>
            <person name="Guan P."/>
            <person name="Blas A."/>
            <person name="Wai C.M."/>
            <person name="Ackerman C.M."/>
            <person name="Ren Y."/>
            <person name="Liu C."/>
            <person name="Wang J."/>
            <person name="Wang J."/>
            <person name="Na J.K."/>
            <person name="Shakirov E.V."/>
            <person name="Haas B."/>
            <person name="Thimmapuram J."/>
            <person name="Nelson D."/>
            <person name="Wang X."/>
            <person name="Bowers J.E."/>
            <person name="Gschwend A.R."/>
            <person name="Delcher A.L."/>
            <person name="Singh R."/>
            <person name="Suzuki J.Y."/>
            <person name="Tripathi S."/>
            <person name="Neupane K."/>
            <person name="Wei H."/>
            <person name="Irikura B."/>
            <person name="Paidi M."/>
            <person name="Jiang N."/>
            <person name="Zhang W."/>
            <person name="Presting G."/>
            <person name="Windsor A."/>
            <person name="Navajas-Perez R."/>
            <person name="Torres M.J."/>
            <person name="Feltus F.A."/>
            <person name="Porter B."/>
            <person name="Li Y."/>
            <person name="Burroughs A.M."/>
            <person name="Luo M.C."/>
            <person name="Liu L."/>
            <person name="Christopher D.A."/>
            <person name="Mount S.M."/>
            <person name="Moore P.H."/>
            <person name="Sugimura T."/>
            <person name="Jiang J."/>
            <person name="Schuler M.A."/>
            <person name="Friedman V."/>
            <person name="Mitchell-Olds T."/>
            <person name="Shippen D.E."/>
            <person name="dePamphilis C.W."/>
            <person name="Palmer J.D."/>
            <person name="Freeling M."/>
            <person name="Paterson A.H."/>
            <person name="Gonsalves D."/>
            <person name="Wang L."/>
            <person name="Alam M."/>
        </authorList>
    </citation>
    <scope>NUCLEOTIDE SEQUENCE [LARGE SCALE GENOMIC DNA]</scope>
    <source>
        <strain>cv. SunUp</strain>
    </source>
</reference>
<feature type="chain" id="PRO_0000355492" description="Large ribosomal subunit protein bL20c">
    <location>
        <begin position="1"/>
        <end position="117"/>
    </location>
</feature>
<sequence length="117" mass="14059">MTRIKRGYIARRRRTKIRLFASSFRGAHSRLTRTITQQRIRALVSAHRDRGRKKRDFRRLWITRINAVIRGDGVSYSYNRFIHNLYKKQLLLNRKILAQIAISNRSCLYTISNEIRK</sequence>
<organism>
    <name type="scientific">Carica papaya</name>
    <name type="common">Papaya</name>
    <dbReference type="NCBI Taxonomy" id="3649"/>
    <lineage>
        <taxon>Eukaryota</taxon>
        <taxon>Viridiplantae</taxon>
        <taxon>Streptophyta</taxon>
        <taxon>Embryophyta</taxon>
        <taxon>Tracheophyta</taxon>
        <taxon>Spermatophyta</taxon>
        <taxon>Magnoliopsida</taxon>
        <taxon>eudicotyledons</taxon>
        <taxon>Gunneridae</taxon>
        <taxon>Pentapetalae</taxon>
        <taxon>rosids</taxon>
        <taxon>malvids</taxon>
        <taxon>Brassicales</taxon>
        <taxon>Caricaceae</taxon>
        <taxon>Carica</taxon>
    </lineage>
</organism>